<comment type="function">
    <text evidence="1">Probable gustatory receptor which mediates acceptance or avoidance behavior, depending on its substrates.</text>
</comment>
<comment type="subcellular location">
    <subcellularLocation>
        <location evidence="1">Cell membrane</location>
        <topology evidence="1">Multi-pass membrane protein</topology>
    </subcellularLocation>
</comment>
<comment type="alternative products">
    <event type="alternative splicing"/>
    <isoform>
        <id>P83292-1</id>
        <name evidence="6">B</name>
        <sequence type="displayed"/>
    </isoform>
    <isoform>
        <id>P83292-2</id>
        <id>Q9VQE7-1</id>
        <name evidence="6">C</name>
        <sequence type="described" ref="VSP_059041"/>
    </isoform>
    <isoform>
        <id>P83292-3</id>
        <name>D</name>
        <sequence type="described" ref="VSP_059040"/>
    </isoform>
</comment>
<comment type="tissue specificity">
    <text evidence="3 4">Expressed in the adult labellar chemosensory neurons and labral sense organ. Expressed in neurons of the dorsal pharyngeal sense organ of larvae.</text>
</comment>
<comment type="similarity">
    <text evidence="5">Belongs to the insect chemoreceptor superfamily. Gustatory receptor (GR) family. Gr2a subfamily.</text>
</comment>
<sequence>MFPPTRVQASSRVVLKIFHFILVAFSLRSRRLSRLVLWLQFLGWLTWFISMWTQSVIYAQTIDCTLDCSLRHILTFFQTVSHAFIVVTSFLDGFRIKQDQLDEPIAFEDSDPWLAFTVLAMLVPTLGVEYLVCSNAPEYAFRIRIYHLKTLPSFLALQVQIISFILEVMKVNIRVRQTKLQLLILARELSCRWPQRKQKPQFSDQQAHRVKDLKRRYNDLHYLFVRINGYFGGSLLTIIIVHFAIFVSNSYWLFVDIRTRPWRIYAILLNLGFIFNVALQMAAACWHCQQSYNLGRQIGCLISKLVKPQGSKLYNDLVSEFSLQTLHQRFVVTAKDFFSLNLHLLSSMFAAVVTYLVILIQFMFAERSSTRGSG</sequence>
<evidence type="ECO:0000250" key="1"/>
<evidence type="ECO:0000255" key="2"/>
<evidence type="ECO:0000269" key="3">
    <source>
    </source>
</evidence>
<evidence type="ECO:0000269" key="4">
    <source>
    </source>
</evidence>
<evidence type="ECO:0000305" key="5"/>
<evidence type="ECO:0000312" key="6">
    <source>
        <dbReference type="FlyBase" id="FBgn0041248"/>
    </source>
</evidence>
<proteinExistence type="evidence at transcript level"/>
<reference key="1">
    <citation type="journal article" date="2000" name="Science">
        <title>The genome sequence of Drosophila melanogaster.</title>
        <authorList>
            <person name="Adams M.D."/>
            <person name="Celniker S.E."/>
            <person name="Holt R.A."/>
            <person name="Evans C.A."/>
            <person name="Gocayne J.D."/>
            <person name="Amanatides P.G."/>
            <person name="Scherer S.E."/>
            <person name="Li P.W."/>
            <person name="Hoskins R.A."/>
            <person name="Galle R.F."/>
            <person name="George R.A."/>
            <person name="Lewis S.E."/>
            <person name="Richards S."/>
            <person name="Ashburner M."/>
            <person name="Henderson S.N."/>
            <person name="Sutton G.G."/>
            <person name="Wortman J.R."/>
            <person name="Yandell M.D."/>
            <person name="Zhang Q."/>
            <person name="Chen L.X."/>
            <person name="Brandon R.C."/>
            <person name="Rogers Y.-H.C."/>
            <person name="Blazej R.G."/>
            <person name="Champe M."/>
            <person name="Pfeiffer B.D."/>
            <person name="Wan K.H."/>
            <person name="Doyle C."/>
            <person name="Baxter E.G."/>
            <person name="Helt G."/>
            <person name="Nelson C.R."/>
            <person name="Miklos G.L.G."/>
            <person name="Abril J.F."/>
            <person name="Agbayani A."/>
            <person name="An H.-J."/>
            <person name="Andrews-Pfannkoch C."/>
            <person name="Baldwin D."/>
            <person name="Ballew R.M."/>
            <person name="Basu A."/>
            <person name="Baxendale J."/>
            <person name="Bayraktaroglu L."/>
            <person name="Beasley E.M."/>
            <person name="Beeson K.Y."/>
            <person name="Benos P.V."/>
            <person name="Berman B.P."/>
            <person name="Bhandari D."/>
            <person name="Bolshakov S."/>
            <person name="Borkova D."/>
            <person name="Botchan M.R."/>
            <person name="Bouck J."/>
            <person name="Brokstein P."/>
            <person name="Brottier P."/>
            <person name="Burtis K.C."/>
            <person name="Busam D.A."/>
            <person name="Butler H."/>
            <person name="Cadieu E."/>
            <person name="Center A."/>
            <person name="Chandra I."/>
            <person name="Cherry J.M."/>
            <person name="Cawley S."/>
            <person name="Dahlke C."/>
            <person name="Davenport L.B."/>
            <person name="Davies P."/>
            <person name="de Pablos B."/>
            <person name="Delcher A."/>
            <person name="Deng Z."/>
            <person name="Mays A.D."/>
            <person name="Dew I."/>
            <person name="Dietz S.M."/>
            <person name="Dodson K."/>
            <person name="Doup L.E."/>
            <person name="Downes M."/>
            <person name="Dugan-Rocha S."/>
            <person name="Dunkov B.C."/>
            <person name="Dunn P."/>
            <person name="Durbin K.J."/>
            <person name="Evangelista C.C."/>
            <person name="Ferraz C."/>
            <person name="Ferriera S."/>
            <person name="Fleischmann W."/>
            <person name="Fosler C."/>
            <person name="Gabrielian A.E."/>
            <person name="Garg N.S."/>
            <person name="Gelbart W.M."/>
            <person name="Glasser K."/>
            <person name="Glodek A."/>
            <person name="Gong F."/>
            <person name="Gorrell J.H."/>
            <person name="Gu Z."/>
            <person name="Guan P."/>
            <person name="Harris M."/>
            <person name="Harris N.L."/>
            <person name="Harvey D.A."/>
            <person name="Heiman T.J."/>
            <person name="Hernandez J.R."/>
            <person name="Houck J."/>
            <person name="Hostin D."/>
            <person name="Houston K.A."/>
            <person name="Howland T.J."/>
            <person name="Wei M.-H."/>
            <person name="Ibegwam C."/>
            <person name="Jalali M."/>
            <person name="Kalush F."/>
            <person name="Karpen G.H."/>
            <person name="Ke Z."/>
            <person name="Kennison J.A."/>
            <person name="Ketchum K.A."/>
            <person name="Kimmel B.E."/>
            <person name="Kodira C.D."/>
            <person name="Kraft C.L."/>
            <person name="Kravitz S."/>
            <person name="Kulp D."/>
            <person name="Lai Z."/>
            <person name="Lasko P."/>
            <person name="Lei Y."/>
            <person name="Levitsky A.A."/>
            <person name="Li J.H."/>
            <person name="Li Z."/>
            <person name="Liang Y."/>
            <person name="Lin X."/>
            <person name="Liu X."/>
            <person name="Mattei B."/>
            <person name="McIntosh T.C."/>
            <person name="McLeod M.P."/>
            <person name="McPherson D."/>
            <person name="Merkulov G."/>
            <person name="Milshina N.V."/>
            <person name="Mobarry C."/>
            <person name="Morris J."/>
            <person name="Moshrefi A."/>
            <person name="Mount S.M."/>
            <person name="Moy M."/>
            <person name="Murphy B."/>
            <person name="Murphy L."/>
            <person name="Muzny D.M."/>
            <person name="Nelson D.L."/>
            <person name="Nelson D.R."/>
            <person name="Nelson K.A."/>
            <person name="Nixon K."/>
            <person name="Nusskern D.R."/>
            <person name="Pacleb J.M."/>
            <person name="Palazzolo M."/>
            <person name="Pittman G.S."/>
            <person name="Pan S."/>
            <person name="Pollard J."/>
            <person name="Puri V."/>
            <person name="Reese M.G."/>
            <person name="Reinert K."/>
            <person name="Remington K."/>
            <person name="Saunders R.D.C."/>
            <person name="Scheeler F."/>
            <person name="Shen H."/>
            <person name="Shue B.C."/>
            <person name="Siden-Kiamos I."/>
            <person name="Simpson M."/>
            <person name="Skupski M.P."/>
            <person name="Smith T.J."/>
            <person name="Spier E."/>
            <person name="Spradling A.C."/>
            <person name="Stapleton M."/>
            <person name="Strong R."/>
            <person name="Sun E."/>
            <person name="Svirskas R."/>
            <person name="Tector C."/>
            <person name="Turner R."/>
            <person name="Venter E."/>
            <person name="Wang A.H."/>
            <person name="Wang X."/>
            <person name="Wang Z.-Y."/>
            <person name="Wassarman D.A."/>
            <person name="Weinstock G.M."/>
            <person name="Weissenbach J."/>
            <person name="Williams S.M."/>
            <person name="Woodage T."/>
            <person name="Worley K.C."/>
            <person name="Wu D."/>
            <person name="Yang S."/>
            <person name="Yao Q.A."/>
            <person name="Ye J."/>
            <person name="Yeh R.-F."/>
            <person name="Zaveri J.S."/>
            <person name="Zhan M."/>
            <person name="Zhang G."/>
            <person name="Zhao Q."/>
            <person name="Zheng L."/>
            <person name="Zheng X.H."/>
            <person name="Zhong F.N."/>
            <person name="Zhong W."/>
            <person name="Zhou X."/>
            <person name="Zhu S.C."/>
            <person name="Zhu X."/>
            <person name="Smith H.O."/>
            <person name="Gibbs R.A."/>
            <person name="Myers E.W."/>
            <person name="Rubin G.M."/>
            <person name="Venter J.C."/>
        </authorList>
    </citation>
    <scope>NUCLEOTIDE SEQUENCE [LARGE SCALE GENOMIC DNA]</scope>
    <source>
        <strain>Berkeley</strain>
    </source>
</reference>
<reference key="2">
    <citation type="journal article" date="2002" name="Genome Biol.">
        <title>Annotation of the Drosophila melanogaster euchromatic genome: a systematic review.</title>
        <authorList>
            <person name="Misra S."/>
            <person name="Crosby M.A."/>
            <person name="Mungall C.J."/>
            <person name="Matthews B.B."/>
            <person name="Campbell K.S."/>
            <person name="Hradecky P."/>
            <person name="Huang Y."/>
            <person name="Kaminker J.S."/>
            <person name="Millburn G.H."/>
            <person name="Prochnik S.E."/>
            <person name="Smith C.D."/>
            <person name="Tupy J.L."/>
            <person name="Whitfield E.J."/>
            <person name="Bayraktaroglu L."/>
            <person name="Berman B.P."/>
            <person name="Bettencourt B.R."/>
            <person name="Celniker S.E."/>
            <person name="de Grey A.D.N.J."/>
            <person name="Drysdale R.A."/>
            <person name="Harris N.L."/>
            <person name="Richter J."/>
            <person name="Russo S."/>
            <person name="Schroeder A.J."/>
            <person name="Shu S.Q."/>
            <person name="Stapleton M."/>
            <person name="Yamada C."/>
            <person name="Ashburner M."/>
            <person name="Gelbart W.M."/>
            <person name="Rubin G.M."/>
            <person name="Lewis S.E."/>
        </authorList>
    </citation>
    <scope>GENOME REANNOTATION</scope>
    <source>
        <strain>Berkeley</strain>
    </source>
</reference>
<reference key="3">
    <citation type="submission" date="2005-05" db="EMBL/GenBank/DDBJ databases">
        <authorList>
            <person name="Stapleton M."/>
            <person name="Carlson J.W."/>
            <person name="Chavez C."/>
            <person name="Frise E."/>
            <person name="George R.A."/>
            <person name="Pacleb J.M."/>
            <person name="Park S."/>
            <person name="Wan K.H."/>
            <person name="Yu C."/>
            <person name="Celniker S.E."/>
        </authorList>
    </citation>
    <scope>NUCLEOTIDE SEQUENCE [LARGE SCALE MRNA] OF 10-374 (ISOFORM D)</scope>
    <source>
        <strain>Berkeley</strain>
    </source>
</reference>
<reference key="4">
    <citation type="journal article" date="2000" name="Science">
        <title>Candidate taste receptors in Drosophila.</title>
        <authorList>
            <person name="Clyne P.J."/>
            <person name="Warr C.G."/>
            <person name="Carlson J.R."/>
        </authorList>
    </citation>
    <scope>IDENTIFICATION</scope>
    <scope>TISSUE SPECIFICITY</scope>
</reference>
<reference key="5">
    <citation type="journal article" date="2001" name="Curr. Biol.">
        <title>Spatially restricted expression of candidate taste receptors in the Drosophila gustatory system.</title>
        <authorList>
            <person name="Dunipace L."/>
            <person name="Meister S."/>
            <person name="McNealy C."/>
            <person name="Amrein H."/>
        </authorList>
    </citation>
    <scope>IDENTIFICATION</scope>
</reference>
<reference key="6">
    <citation type="journal article" date="2011" name="J. Neurosci.">
        <title>Molecular and cellular organization of the taste system in the Drosophila larva.</title>
        <authorList>
            <person name="Kwon J.Y."/>
            <person name="Dahanukar A."/>
            <person name="Weiss L.A."/>
            <person name="Carlson J.R."/>
        </authorList>
    </citation>
    <scope>TISSUE SPECIFICITY</scope>
</reference>
<protein>
    <recommendedName>
        <fullName>Gustatory receptor 23a</fullName>
    </recommendedName>
</protein>
<name>G23A_DROME</name>
<organism>
    <name type="scientific">Drosophila melanogaster</name>
    <name type="common">Fruit fly</name>
    <dbReference type="NCBI Taxonomy" id="7227"/>
    <lineage>
        <taxon>Eukaryota</taxon>
        <taxon>Metazoa</taxon>
        <taxon>Ecdysozoa</taxon>
        <taxon>Arthropoda</taxon>
        <taxon>Hexapoda</taxon>
        <taxon>Insecta</taxon>
        <taxon>Pterygota</taxon>
        <taxon>Neoptera</taxon>
        <taxon>Endopterygota</taxon>
        <taxon>Diptera</taxon>
        <taxon>Brachycera</taxon>
        <taxon>Muscomorpha</taxon>
        <taxon>Ephydroidea</taxon>
        <taxon>Drosophilidae</taxon>
        <taxon>Drosophila</taxon>
        <taxon>Sophophora</taxon>
    </lineage>
</organism>
<feature type="chain" id="PRO_0000216500" description="Gustatory receptor 23a">
    <location>
        <begin position="1"/>
        <end position="374"/>
    </location>
</feature>
<feature type="topological domain" description="Cytoplasmic" evidence="1">
    <location>
        <begin position="1"/>
        <end position="6"/>
    </location>
</feature>
<feature type="transmembrane region" description="Helical; Name=1" evidence="2">
    <location>
        <begin position="7"/>
        <end position="27"/>
    </location>
</feature>
<feature type="topological domain" description="Extracellular" evidence="1">
    <location>
        <begin position="28"/>
        <end position="36"/>
    </location>
</feature>
<feature type="transmembrane region" description="Helical; Name=2" evidence="2">
    <location>
        <begin position="37"/>
        <end position="57"/>
    </location>
</feature>
<feature type="topological domain" description="Cytoplasmic" evidence="1">
    <location>
        <begin position="58"/>
        <end position="72"/>
    </location>
</feature>
<feature type="transmembrane region" description="Helical; Name=3" evidence="2">
    <location>
        <begin position="73"/>
        <end position="93"/>
    </location>
</feature>
<feature type="topological domain" description="Extracellular" evidence="1">
    <location>
        <begin position="94"/>
        <end position="112"/>
    </location>
</feature>
<feature type="transmembrane region" description="Helical; Name=4" evidence="2">
    <location>
        <begin position="113"/>
        <end position="133"/>
    </location>
</feature>
<feature type="topological domain" description="Cytoplasmic" evidence="1">
    <location>
        <begin position="134"/>
        <end position="226"/>
    </location>
</feature>
<feature type="transmembrane region" description="Helical; Name=5" evidence="2">
    <location>
        <begin position="227"/>
        <end position="247"/>
    </location>
</feature>
<feature type="topological domain" description="Extracellular" evidence="1">
    <location>
        <begin position="248"/>
        <end position="263"/>
    </location>
</feature>
<feature type="transmembrane region" description="Helical; Name=6" evidence="2">
    <location>
        <begin position="264"/>
        <end position="284"/>
    </location>
</feature>
<feature type="topological domain" description="Cytoplasmic" evidence="1">
    <location>
        <begin position="285"/>
        <end position="343"/>
    </location>
</feature>
<feature type="transmembrane region" description="Helical; Name=7" evidence="2">
    <location>
        <begin position="344"/>
        <end position="364"/>
    </location>
</feature>
<feature type="topological domain" description="Extracellular" evidence="1">
    <location>
        <begin position="365"/>
        <end position="374"/>
    </location>
</feature>
<feature type="splice variant" id="VSP_059040" description="In isoform D.">
    <original>MFPPTRVQASSRVVLKIFHFILVAFSLRSRRLSRLVLWLQFLGWLTWFISMWTQSVIYAQTIDCTLDCSLRHILTFFQTVSHAFIVVTSFLDGFRIKQDQLDEPIAFEDSDPWLAFTVLAMLVPTLGVEYLVCSNAPEYAFRIRIYHLKTLPSFLALQVQIISFILEVMKVNIRVRQTKLQLLILARELSCRWPQRKQKPQFSDQQAHRVKDLKRRYNDLHYLFVRINGYFGGSLLTIIIVHFAIFVSNSYWLFVDIRTRPWRIYAILLNLGFIFNVALQMAAACWHCQQSYNLGRQIGCLISKLVKPQGSKLYNDLVSEFSLQTLHQR</original>
    <variation>MKTLECLTRRFLEVIFSVLALVPLPPISQLGWLFLSLAIRCCWIVYFIYLLDVAISFSWVAIENVGNAVGTMLFVGNSVLGFALLLESVLKQKTHSQLEDLRVQTELQLQRLGMFGRSRHAAYLLPLIGVQFTCDLVRLATNFGETVSPVFCISLPLMWLLRYRYVQLVQHVMDLNQRSIHLRRSLLSMASGNDLWQPYGVQECLQLQTLRTTYERIFECYETFSDCYGWGMLGLHLLTSFQFVTNAYWMIMGIYDGGNVRSLIFNGATGIDFGTPIATLFWHGDSGAENNQAGPVGRTDCVRGLRSLVGLHCAGDAGSHFGSRVFGVLERARICLSYQDLSPENAAQFSGSAGADYILYPGGHEGEHKG</variation>
    <location>
        <begin position="1"/>
        <end position="329"/>
    </location>
</feature>
<feature type="splice variant" id="VSP_059041" description="In isoform C.">
    <original>MFPPTRVQASSRVVLKIFHFILVAFSLRSRRLSRLVLWLQFLGWLTWFISMWTQSVIYAQTIDCTLDCSLRHILTFFQTVSHAFIVVTSFLDGFRIKQDQLDEPIAFEDSDPWLAFTVLAMLVPTLGVEYLVCSNAPEYAFRIRIYHLKTLPSFLALQVQIISFILEVMKVNIRVRQTKLQLLILARELSCRWPQRKQKPQFSDQQAHRVKDLKRRYNDLHYLFVRINGYFGGSLLTIIIVHFAIFVSNSYWLFVDIRTRPWRIYAILLNLGFIFNVALQMAAACWHCQQSYNL</original>
    <variation>MKTLECLTRRFLEVIFSVLALVPLPPISQLGWLFLSLAIRCCWIVYFIYLLDVAISFSWVAIENVGNAVGTMLFVGNSVLGFALLLESVLKQKTHSQLEDLRVQTELQLQRLGMFGRSRHAAYLLPLIGVQFTCDLVRLATNFGETVSPVFCISLPLMWLLRYRYVQLVQHVMDLNQRSIHLRRSLLSMASGNDLWQPYGVQECLQLQTLRTTYERIFECYETFSDCYGWGMLGLHLLTSFQFVTNAYWMIMGIYDGGNVRSLIFNGATGIDFGTPIATLFWHGDSGAEN</variation>
    <location>
        <begin position="1"/>
        <end position="294"/>
    </location>
</feature>
<dbReference type="EMBL" id="AE014134">
    <property type="protein sequence ID" value="AAF51227.3"/>
    <property type="molecule type" value="Genomic_DNA"/>
</dbReference>
<dbReference type="EMBL" id="AE014134">
    <property type="protein sequence ID" value="AAO41162.1"/>
    <property type="molecule type" value="Genomic_DNA"/>
</dbReference>
<dbReference type="EMBL" id="BT023352">
    <property type="protein sequence ID" value="AAY55768.1"/>
    <property type="molecule type" value="mRNA"/>
</dbReference>
<dbReference type="RefSeq" id="NP_523459.3">
    <molecule id="P83292-2"/>
    <property type="nucleotide sequence ID" value="NM_078735.6"/>
</dbReference>
<dbReference type="RefSeq" id="NP_787965.1">
    <molecule id="P83292-1"/>
    <property type="nucleotide sequence ID" value="NM_175951.2"/>
</dbReference>
<dbReference type="SMR" id="P83292"/>
<dbReference type="FunCoup" id="P83292">
    <property type="interactions" value="6"/>
</dbReference>
<dbReference type="STRING" id="7227.FBpp0077386"/>
<dbReference type="PaxDb" id="7227-FBpp0077386"/>
<dbReference type="EnsemblMetazoa" id="FBtr0077702">
    <molecule id="P83292-1"/>
    <property type="protein sequence ID" value="FBpp0077386"/>
    <property type="gene ID" value="FBgn0041248"/>
</dbReference>
<dbReference type="EnsemblMetazoa" id="FBtr0273435">
    <molecule id="P83292-2"/>
    <property type="protein sequence ID" value="FBpp0271943"/>
    <property type="gene ID" value="FBgn0041248"/>
</dbReference>
<dbReference type="GeneID" id="33453"/>
<dbReference type="KEGG" id="dme:Dmel_CG15396"/>
<dbReference type="AGR" id="FB:FBgn0041248"/>
<dbReference type="CTD" id="33453"/>
<dbReference type="FlyBase" id="FBgn0041248">
    <property type="gene designation" value="Gr23a"/>
</dbReference>
<dbReference type="VEuPathDB" id="VectorBase:FBgn0041248"/>
<dbReference type="InParanoid" id="P83292"/>
<dbReference type="OMA" id="FWYGDAG"/>
<dbReference type="OrthoDB" id="6366728at2759"/>
<dbReference type="PhylomeDB" id="P83292"/>
<dbReference type="BioGRID-ORCS" id="33453">
    <property type="hits" value="0 hits in 1 CRISPR screen"/>
</dbReference>
<dbReference type="GenomeRNAi" id="33453"/>
<dbReference type="PRO" id="PR:P83292"/>
<dbReference type="Proteomes" id="UP000000803">
    <property type="component" value="Chromosome 2L"/>
</dbReference>
<dbReference type="Bgee" id="FBgn0041248">
    <property type="expression patterns" value="Expressed in mouthpart"/>
</dbReference>
<dbReference type="GO" id="GO:0030424">
    <property type="term" value="C:axon"/>
    <property type="evidence" value="ECO:0000318"/>
    <property type="project" value="GO_Central"/>
</dbReference>
<dbReference type="GO" id="GO:0030425">
    <property type="term" value="C:dendrite"/>
    <property type="evidence" value="ECO:0000318"/>
    <property type="project" value="GO_Central"/>
</dbReference>
<dbReference type="GO" id="GO:0016020">
    <property type="term" value="C:membrane"/>
    <property type="evidence" value="ECO:0000303"/>
    <property type="project" value="UniProtKB"/>
</dbReference>
<dbReference type="GO" id="GO:0043025">
    <property type="term" value="C:neuronal cell body"/>
    <property type="evidence" value="ECO:0000318"/>
    <property type="project" value="GO_Central"/>
</dbReference>
<dbReference type="GO" id="GO:0005886">
    <property type="term" value="C:plasma membrane"/>
    <property type="evidence" value="ECO:0000250"/>
    <property type="project" value="FlyBase"/>
</dbReference>
<dbReference type="GO" id="GO:0015276">
    <property type="term" value="F:ligand-gated monoatomic ion channel activity"/>
    <property type="evidence" value="ECO:0000250"/>
    <property type="project" value="FlyBase"/>
</dbReference>
<dbReference type="GO" id="GO:0008527">
    <property type="term" value="F:taste receptor activity"/>
    <property type="evidence" value="ECO:0000303"/>
    <property type="project" value="UniProtKB"/>
</dbReference>
<dbReference type="GO" id="GO:0007635">
    <property type="term" value="P:chemosensory behavior"/>
    <property type="evidence" value="ECO:0000318"/>
    <property type="project" value="GO_Central"/>
</dbReference>
<dbReference type="GO" id="GO:0008049">
    <property type="term" value="P:male courtship behavior"/>
    <property type="evidence" value="ECO:0000318"/>
    <property type="project" value="GO_Central"/>
</dbReference>
<dbReference type="GO" id="GO:0034220">
    <property type="term" value="P:monoatomic ion transmembrane transport"/>
    <property type="evidence" value="ECO:0000250"/>
    <property type="project" value="FlyBase"/>
</dbReference>
<dbReference type="GO" id="GO:0050909">
    <property type="term" value="P:sensory perception of taste"/>
    <property type="evidence" value="ECO:0000303"/>
    <property type="project" value="UniProtKB"/>
</dbReference>
<dbReference type="GO" id="GO:0007165">
    <property type="term" value="P:signal transduction"/>
    <property type="evidence" value="ECO:0007669"/>
    <property type="project" value="UniProtKB-KW"/>
</dbReference>
<dbReference type="InterPro" id="IPR013604">
    <property type="entry name" value="7TM_chemorcpt"/>
</dbReference>
<dbReference type="PANTHER" id="PTHR21143:SF133">
    <property type="entry name" value="GUSTATORY AND PHEROMONE RECEPTOR 32A-RELATED"/>
    <property type="match status" value="1"/>
</dbReference>
<dbReference type="PANTHER" id="PTHR21143">
    <property type="entry name" value="INVERTEBRATE GUSTATORY RECEPTOR"/>
    <property type="match status" value="1"/>
</dbReference>
<dbReference type="Pfam" id="PF08395">
    <property type="entry name" value="7tm_7"/>
    <property type="match status" value="1"/>
</dbReference>
<gene>
    <name type="primary">Gr23a</name>
    <name type="synonym">GR23A.1</name>
    <name type="ORF">CG15396</name>
</gene>
<keyword id="KW-0025">Alternative splicing</keyword>
<keyword id="KW-1003">Cell membrane</keyword>
<keyword id="KW-0472">Membrane</keyword>
<keyword id="KW-0675">Receptor</keyword>
<keyword id="KW-1185">Reference proteome</keyword>
<keyword id="KW-0807">Transducer</keyword>
<keyword id="KW-0812">Transmembrane</keyword>
<keyword id="KW-1133">Transmembrane helix</keyword>
<accession>P83292</accession>
<accession>Q4V3K4</accession>
<accession>Q9VQE7</accession>